<keyword id="KW-0007">Acetylation</keyword>
<keyword id="KW-0025">Alternative splicing</keyword>
<keyword id="KW-0150">Chloroplast</keyword>
<keyword id="KW-0963">Cytoplasm</keyword>
<keyword id="KW-0328">Glycosyltransferase</keyword>
<keyword id="KW-0934">Plastid</keyword>
<keyword id="KW-0660">Purine salvage</keyword>
<keyword id="KW-1185">Reference proteome</keyword>
<keyword id="KW-0808">Transferase</keyword>
<keyword id="KW-0809">Transit peptide</keyword>
<sequence>MQTIIISPLVSHRLCLARAVPCNRLLNNHHRAPPSIRLSNHRSTTSLRLFSSAAASRDSEMATEDVQDPRIAKIASSIRVIPDFPKPGIMFQDITTLLLDTEAFKDTIALFVDRYKDKGISVVAGVEARGFIFGPPIALAIGAKFVPMRKPKKLPGKVISEEYSLEYGTDTIEMHVGAVEPGERAIIIDDLIATGGTLAAAIRLLERVGVKIVECACVIELPELKGKEKLGETSLFVLVKSAA</sequence>
<gene>
    <name type="primary">APT1</name>
    <name type="synonym">APT</name>
    <name type="ordered locus">At1g27450</name>
    <name type="ORF">F17L21.24</name>
</gene>
<organism>
    <name type="scientific">Arabidopsis thaliana</name>
    <name type="common">Mouse-ear cress</name>
    <dbReference type="NCBI Taxonomy" id="3702"/>
    <lineage>
        <taxon>Eukaryota</taxon>
        <taxon>Viridiplantae</taxon>
        <taxon>Streptophyta</taxon>
        <taxon>Embryophyta</taxon>
        <taxon>Tracheophyta</taxon>
        <taxon>Spermatophyta</taxon>
        <taxon>Magnoliopsida</taxon>
        <taxon>eudicotyledons</taxon>
        <taxon>Gunneridae</taxon>
        <taxon>Pentapetalae</taxon>
        <taxon>rosids</taxon>
        <taxon>malvids</taxon>
        <taxon>Brassicales</taxon>
        <taxon>Brassicaceae</taxon>
        <taxon>Camelineae</taxon>
        <taxon>Arabidopsis</taxon>
    </lineage>
</organism>
<proteinExistence type="evidence at protein level"/>
<name>APT1_ARATH</name>
<accession>P31166</accession>
<accession>Q8LGF6</accession>
<accession>Q9FZJ0</accession>
<comment type="function">
    <text evidence="3 5 6 7">Catalyzes a salvage reaction resulting in the formation of AMP, that is energically less costly than de novo synthesis. Contributes primarily to the recycling of adenine into adenylate nucleotides, but is also involved in the inactivation of cytokinins by phosphoribosylation. Catalyzes the conversion of cytokinins from free bases (active form) to the corresponding nucleotides (inactive form).</text>
</comment>
<comment type="catalytic activity">
    <reaction evidence="3 6">
        <text>AMP + diphosphate = 5-phospho-alpha-D-ribose 1-diphosphate + adenine</text>
        <dbReference type="Rhea" id="RHEA:16609"/>
        <dbReference type="ChEBI" id="CHEBI:16708"/>
        <dbReference type="ChEBI" id="CHEBI:33019"/>
        <dbReference type="ChEBI" id="CHEBI:58017"/>
        <dbReference type="ChEBI" id="CHEBI:456215"/>
        <dbReference type="EC" id="2.4.2.7"/>
    </reaction>
</comment>
<comment type="biophysicochemical properties">
    <kinetics>
        <KM evidence="3">1 uM for adenine (at pH 7.4 and 37 degrees Celsius)</KM>
        <KM evidence="3">1800 uM for zeatin (at pH 7.4 and 37 degrees Celsius)</KM>
        <KM evidence="3">2500 uM for isopentenyladenine (at pH 7.4 and 37 degrees Celsius)</KM>
        <KM evidence="3">2400 uM for benzyladenine (at pH 7.4 and 37 degrees Celsius)</KM>
        <Vmax evidence="3">9.6 umol/min/mg enzyme with adenine as substrate (at pH 7.4 and 37 degrees Celsius)</Vmax>
        <Vmax evidence="3">10.0 umol/min/mg enzyme with zeatin as substrate (at pH 7.4 and 37 degrees Celsius)</Vmax>
        <Vmax evidence="3">6.7 umol/min/mg enzyme with isopentenyladenine as substrate (at pH 7.4 and 37 degrees Celsius)</Vmax>
        <Vmax evidence="3">1.5 umol/min/mg enzyme with benzyladenine as substrate (at pH 7.4 and 37 degrees Celsius)</Vmax>
    </kinetics>
    <phDependence>
        <text evidence="3">Optimum pH is 8.8.</text>
    </phDependence>
</comment>
<comment type="pathway">
    <text>Purine metabolism; AMP biosynthesis via salvage pathway; AMP from adenine: step 1/1.</text>
</comment>
<comment type="subunit">
    <text evidence="1">Homodimer.</text>
</comment>
<comment type="subcellular location">
    <molecule>Isoform 1</molecule>
    <subcellularLocation>
        <location evidence="4">Plastid</location>
        <location evidence="4">Chloroplast</location>
    </subcellularLocation>
</comment>
<comment type="subcellular location">
    <molecule>Isoform 2</molecule>
    <subcellularLocation>
        <location>Cytoplasm</location>
    </subcellularLocation>
</comment>
<comment type="alternative products">
    <event type="alternative splicing"/>
    <isoform>
        <id>P31166-1</id>
        <name>1</name>
        <sequence type="displayed"/>
    </isoform>
    <isoform>
        <id>P31166-2</id>
        <name>2</name>
        <sequence type="described" ref="VSP_009002"/>
    </isoform>
</comment>
<comment type="disruption phenotype">
    <text evidence="6 7">Male sterility due to pollen abortion after meiosis. Accumulation of free bases of cytokinins and enhanced resistance to exogenous cytokinins.</text>
</comment>
<comment type="miscellaneous">
    <text evidence="11">Plants with reduced activity of APT1 and increased levels of cellular adenine show enhanced stress tolerance and improve growth, leading to increases in plant biomass.</text>
</comment>
<comment type="similarity">
    <text evidence="10">Belongs to the purine/pyrimidine phosphoribosyltransferase family.</text>
</comment>
<comment type="sequence caution" evidence="10">
    <conflict type="erroneous gene model prediction">
        <sequence resource="EMBL-CDS" id="AAF99737"/>
    </conflict>
</comment>
<dbReference type="EC" id="2.4.2.7"/>
<dbReference type="EMBL" id="X58640">
    <property type="protein sequence ID" value="CAA41497.1"/>
    <property type="molecule type" value="mRNA"/>
</dbReference>
<dbReference type="EMBL" id="L19637">
    <property type="protein sequence ID" value="AAA20677.1"/>
    <property type="molecule type" value="Genomic_DNA"/>
</dbReference>
<dbReference type="EMBL" id="AC004557">
    <property type="protein sequence ID" value="AAF99737.1"/>
    <property type="status" value="ALT_SEQ"/>
    <property type="molecule type" value="Genomic_DNA"/>
</dbReference>
<dbReference type="EMBL" id="CP002684">
    <property type="protein sequence ID" value="AEE30831.1"/>
    <property type="molecule type" value="Genomic_DNA"/>
</dbReference>
<dbReference type="EMBL" id="CP002684">
    <property type="protein sequence ID" value="AEE30832.1"/>
    <property type="molecule type" value="Genomic_DNA"/>
</dbReference>
<dbReference type="EMBL" id="CP002684">
    <property type="protein sequence ID" value="ANM60751.1"/>
    <property type="molecule type" value="Genomic_DNA"/>
</dbReference>
<dbReference type="EMBL" id="AF325045">
    <property type="protein sequence ID" value="AAG40397.1"/>
    <property type="molecule type" value="mRNA"/>
</dbReference>
<dbReference type="EMBL" id="AY128377">
    <property type="protein sequence ID" value="AAM91580.1"/>
    <property type="molecule type" value="mRNA"/>
</dbReference>
<dbReference type="EMBL" id="BT000370">
    <property type="protein sequence ID" value="AAN15689.1"/>
    <property type="molecule type" value="mRNA"/>
</dbReference>
<dbReference type="EMBL" id="AY084300">
    <property type="protein sequence ID" value="AAM60891.1"/>
    <property type="molecule type" value="mRNA"/>
</dbReference>
<dbReference type="PIR" id="G86399">
    <property type="entry name" value="G86399"/>
</dbReference>
<dbReference type="PIR" id="S20867">
    <property type="entry name" value="S20867"/>
</dbReference>
<dbReference type="RefSeq" id="NP_001323015.1">
    <molecule id="P31166-2"/>
    <property type="nucleotide sequence ID" value="NM_001332762.1"/>
</dbReference>
<dbReference type="RefSeq" id="NP_564284.1">
    <molecule id="P31166-1"/>
    <property type="nucleotide sequence ID" value="NM_102509.4"/>
</dbReference>
<dbReference type="RefSeq" id="NP_849714.1">
    <molecule id="P31166-2"/>
    <property type="nucleotide sequence ID" value="NM_179383.3"/>
</dbReference>
<dbReference type="SMR" id="P31166"/>
<dbReference type="BioGRID" id="24871">
    <property type="interactions" value="3"/>
</dbReference>
<dbReference type="FunCoup" id="P31166">
    <property type="interactions" value="2542"/>
</dbReference>
<dbReference type="IntAct" id="P31166">
    <property type="interactions" value="4"/>
</dbReference>
<dbReference type="STRING" id="3702.P31166"/>
<dbReference type="iPTMnet" id="P31166"/>
<dbReference type="MetOSite" id="P31166"/>
<dbReference type="ProteomicsDB" id="244487">
    <molecule id="P31166-1"/>
</dbReference>
<dbReference type="EnsemblPlants" id="AT1G27450.1">
    <molecule id="P31166-1"/>
    <property type="protein sequence ID" value="AT1G27450.1"/>
    <property type="gene ID" value="AT1G27450"/>
</dbReference>
<dbReference type="EnsemblPlants" id="AT1G27450.2">
    <molecule id="P31166-2"/>
    <property type="protein sequence ID" value="AT1G27450.2"/>
    <property type="gene ID" value="AT1G27450"/>
</dbReference>
<dbReference type="EnsemblPlants" id="AT1G27450.4">
    <molecule id="P31166-2"/>
    <property type="protein sequence ID" value="AT1G27450.4"/>
    <property type="gene ID" value="AT1G27450"/>
</dbReference>
<dbReference type="GeneID" id="839636"/>
<dbReference type="Gramene" id="AT1G27450.1">
    <molecule id="P31166-1"/>
    <property type="protein sequence ID" value="AT1G27450.1"/>
    <property type="gene ID" value="AT1G27450"/>
</dbReference>
<dbReference type="Gramene" id="AT1G27450.2">
    <molecule id="P31166-2"/>
    <property type="protein sequence ID" value="AT1G27450.2"/>
    <property type="gene ID" value="AT1G27450"/>
</dbReference>
<dbReference type="Gramene" id="AT1G27450.4">
    <molecule id="P31166-2"/>
    <property type="protein sequence ID" value="AT1G27450.4"/>
    <property type="gene ID" value="AT1G27450"/>
</dbReference>
<dbReference type="KEGG" id="ath:AT1G27450"/>
<dbReference type="Araport" id="AT1G27450"/>
<dbReference type="TAIR" id="AT1G27450">
    <property type="gene designation" value="APT1"/>
</dbReference>
<dbReference type="InParanoid" id="P31166"/>
<dbReference type="OrthoDB" id="363185at2759"/>
<dbReference type="PhylomeDB" id="P31166"/>
<dbReference type="BioCyc" id="MetaCyc:AT1G27450-MONOMER"/>
<dbReference type="UniPathway" id="UPA00588">
    <property type="reaction ID" value="UER00646"/>
</dbReference>
<dbReference type="CD-CODE" id="4299E36E">
    <property type="entry name" value="Nucleolus"/>
</dbReference>
<dbReference type="PRO" id="PR:P31166"/>
<dbReference type="Proteomes" id="UP000006548">
    <property type="component" value="Chromosome 1"/>
</dbReference>
<dbReference type="ExpressionAtlas" id="P31166">
    <property type="expression patterns" value="baseline and differential"/>
</dbReference>
<dbReference type="GO" id="GO:0009507">
    <property type="term" value="C:chloroplast"/>
    <property type="evidence" value="ECO:0000314"/>
    <property type="project" value="UniProtKB"/>
</dbReference>
<dbReference type="GO" id="GO:0003999">
    <property type="term" value="F:adenine phosphoribosyltransferase activity"/>
    <property type="evidence" value="ECO:0000314"/>
    <property type="project" value="UniProtKB"/>
</dbReference>
<dbReference type="GO" id="GO:0006168">
    <property type="term" value="P:adenine salvage"/>
    <property type="evidence" value="ECO:0007669"/>
    <property type="project" value="InterPro"/>
</dbReference>
<dbReference type="GO" id="GO:0044209">
    <property type="term" value="P:AMP salvage"/>
    <property type="evidence" value="ECO:0000304"/>
    <property type="project" value="UniProtKB"/>
</dbReference>
<dbReference type="GO" id="GO:0009690">
    <property type="term" value="P:cytokinin metabolic process"/>
    <property type="evidence" value="ECO:0000315"/>
    <property type="project" value="UniProtKB"/>
</dbReference>
<dbReference type="GO" id="GO:0006166">
    <property type="term" value="P:purine ribonucleoside salvage"/>
    <property type="evidence" value="ECO:0007669"/>
    <property type="project" value="UniProtKB-KW"/>
</dbReference>
<dbReference type="CDD" id="cd06223">
    <property type="entry name" value="PRTases_typeI"/>
    <property type="match status" value="1"/>
</dbReference>
<dbReference type="FunFam" id="3.40.50.2020:FF:000022">
    <property type="entry name" value="Adenine phosphoribosyltransferase 1"/>
    <property type="match status" value="1"/>
</dbReference>
<dbReference type="Gene3D" id="3.40.50.2020">
    <property type="match status" value="1"/>
</dbReference>
<dbReference type="HAMAP" id="MF_00004">
    <property type="entry name" value="Aden_phosphoribosyltr"/>
    <property type="match status" value="1"/>
</dbReference>
<dbReference type="InterPro" id="IPR005764">
    <property type="entry name" value="Ade_phspho_trans"/>
</dbReference>
<dbReference type="InterPro" id="IPR050120">
    <property type="entry name" value="Adenine_PRTase"/>
</dbReference>
<dbReference type="InterPro" id="IPR000836">
    <property type="entry name" value="PRibTrfase_dom"/>
</dbReference>
<dbReference type="InterPro" id="IPR029057">
    <property type="entry name" value="PRTase-like"/>
</dbReference>
<dbReference type="NCBIfam" id="TIGR01090">
    <property type="entry name" value="apt"/>
    <property type="match status" value="1"/>
</dbReference>
<dbReference type="NCBIfam" id="NF002634">
    <property type="entry name" value="PRK02304.1-3"/>
    <property type="match status" value="1"/>
</dbReference>
<dbReference type="NCBIfam" id="NF002636">
    <property type="entry name" value="PRK02304.1-5"/>
    <property type="match status" value="1"/>
</dbReference>
<dbReference type="PANTHER" id="PTHR11776">
    <property type="entry name" value="ADENINE PHOSPHORIBOSYLTRANSFERASE"/>
    <property type="match status" value="1"/>
</dbReference>
<dbReference type="PANTHER" id="PTHR11776:SF0">
    <property type="entry name" value="ADENINE PHOSPHORIBOSYLTRANSFERASE 1, CHLOROPLASTIC"/>
    <property type="match status" value="1"/>
</dbReference>
<dbReference type="Pfam" id="PF00156">
    <property type="entry name" value="Pribosyltran"/>
    <property type="match status" value="1"/>
</dbReference>
<dbReference type="SUPFAM" id="SSF53271">
    <property type="entry name" value="PRTase-like"/>
    <property type="match status" value="1"/>
</dbReference>
<dbReference type="PROSITE" id="PS00103">
    <property type="entry name" value="PUR_PYR_PR_TRANSFER"/>
    <property type="match status" value="1"/>
</dbReference>
<evidence type="ECO:0000250" key="1"/>
<evidence type="ECO:0000255" key="2"/>
<evidence type="ECO:0000269" key="3">
    <source>
    </source>
</evidence>
<evidence type="ECO:0000269" key="4">
    <source>
    </source>
</evidence>
<evidence type="ECO:0000269" key="5">
    <source>
    </source>
</evidence>
<evidence type="ECO:0000269" key="6">
    <source>
    </source>
</evidence>
<evidence type="ECO:0000269" key="7">
    <source>
    </source>
</evidence>
<evidence type="ECO:0000303" key="8">
    <source>
    </source>
</evidence>
<evidence type="ECO:0000303" key="9">
    <source>
    </source>
</evidence>
<evidence type="ECO:0000305" key="10"/>
<evidence type="ECO:0000305" key="11">
    <source>
    </source>
</evidence>
<evidence type="ECO:0007744" key="12">
    <source>
    </source>
</evidence>
<feature type="transit peptide" description="Chloroplast" evidence="2">
    <location>
        <begin position="1"/>
        <end position="52"/>
    </location>
</feature>
<feature type="chain" id="PRO_0000149514" description="Adenine phosphoribosyltransferase 1, chloroplastic">
    <location>
        <begin position="53"/>
        <end position="243"/>
    </location>
</feature>
<feature type="splice variant" id="VSP_009002" description="In isoform 2." evidence="8 9">
    <location>
        <begin position="1"/>
        <end position="60"/>
    </location>
</feature>
<feature type="mutagenesis site" description="In apt1-5; loss of activity." evidence="6">
    <original>P</original>
    <variation>T</variation>
    <location>
        <position position="85"/>
    </location>
</feature>
<feature type="mutagenesis site" description="In apt1-6; reduces activity 10-fold." evidence="6">
    <original>L</original>
    <variation>F</variation>
    <location>
        <position position="99"/>
    </location>
</feature>
<feature type="mutagenesis site" description="In apt1-7; loss of activity and male sterility." evidence="6">
    <original>R</original>
    <variation>K</variation>
    <location>
        <position position="149"/>
    </location>
</feature>
<feature type="mutagenesis site" description="In apt1-4; reduces activity 3-fold." evidence="6">
    <original>G</original>
    <variation>E</variation>
    <location>
        <position position="168"/>
    </location>
</feature>
<feature type="mutagenesis site" description="In apt1-8; loss of activity and male sterility." evidence="6">
    <original>G</original>
    <variation>D</variation>
    <location>
        <position position="195"/>
    </location>
</feature>
<feature type="mutagenesis site" description="In apt1-9; loss of activity and male sterility.">
    <original>G</original>
    <variation>R</variation>
    <location>
        <position position="196"/>
    </location>
</feature>
<feature type="initiator methionine" description="Removed" evidence="12">
    <location sequence="P31166-2">
        <position position="1"/>
    </location>
</feature>
<feature type="modified residue" description="N-acetylalanine" evidence="12">
    <location sequence="P31166-2">
        <position position="2"/>
    </location>
</feature>
<reference key="1">
    <citation type="journal article" date="1992" name="Plant Mol. Biol.">
        <title>A complete cDNA for adenine phosphoribosyltransferase from Arabidopsis thaliana.</title>
        <authorList>
            <person name="Moffatt B.A."/>
            <person name="McWhinnie E.A."/>
            <person name="Burkhart W.E."/>
            <person name="Pasternak J.J."/>
            <person name="Rothstein S.J."/>
        </authorList>
    </citation>
    <scope>NUCLEOTIDE SEQUENCE [MRNA] (ISOFORM 2)</scope>
    <source>
        <strain>cv. Columbia</strain>
    </source>
</reference>
<reference key="2">
    <citation type="journal article" date="1994" name="Gene">
        <title>The adenine phosphoribosyltransferase-encoding gene of Arabidopsis thaliana.</title>
        <authorList>
            <person name="Moffatt B.A."/>
            <person name="McWhinnie E.A."/>
            <person name="Agarwal S.K."/>
            <person name="Schaff D.A."/>
        </authorList>
    </citation>
    <scope>NUCLEOTIDE SEQUENCE [GENOMIC DNA] (ISOFORM 2)</scope>
    <source>
        <strain>cv. Columbia</strain>
    </source>
</reference>
<reference key="3">
    <citation type="journal article" date="2000" name="Nature">
        <title>Sequence and analysis of chromosome 1 of the plant Arabidopsis thaliana.</title>
        <authorList>
            <person name="Theologis A."/>
            <person name="Ecker J.R."/>
            <person name="Palm C.J."/>
            <person name="Federspiel N.A."/>
            <person name="Kaul S."/>
            <person name="White O."/>
            <person name="Alonso J."/>
            <person name="Altafi H."/>
            <person name="Araujo R."/>
            <person name="Bowman C.L."/>
            <person name="Brooks S.Y."/>
            <person name="Buehler E."/>
            <person name="Chan A."/>
            <person name="Chao Q."/>
            <person name="Chen H."/>
            <person name="Cheuk R.F."/>
            <person name="Chin C.W."/>
            <person name="Chung M.K."/>
            <person name="Conn L."/>
            <person name="Conway A.B."/>
            <person name="Conway A.R."/>
            <person name="Creasy T.H."/>
            <person name="Dewar K."/>
            <person name="Dunn P."/>
            <person name="Etgu P."/>
            <person name="Feldblyum T.V."/>
            <person name="Feng J.-D."/>
            <person name="Fong B."/>
            <person name="Fujii C.Y."/>
            <person name="Gill J.E."/>
            <person name="Goldsmith A.D."/>
            <person name="Haas B."/>
            <person name="Hansen N.F."/>
            <person name="Hughes B."/>
            <person name="Huizar L."/>
            <person name="Hunter J.L."/>
            <person name="Jenkins J."/>
            <person name="Johnson-Hopson C."/>
            <person name="Khan S."/>
            <person name="Khaykin E."/>
            <person name="Kim C.J."/>
            <person name="Koo H.L."/>
            <person name="Kremenetskaia I."/>
            <person name="Kurtz D.B."/>
            <person name="Kwan A."/>
            <person name="Lam B."/>
            <person name="Langin-Hooper S."/>
            <person name="Lee A."/>
            <person name="Lee J.M."/>
            <person name="Lenz C.A."/>
            <person name="Li J.H."/>
            <person name="Li Y.-P."/>
            <person name="Lin X."/>
            <person name="Liu S.X."/>
            <person name="Liu Z.A."/>
            <person name="Luros J.S."/>
            <person name="Maiti R."/>
            <person name="Marziali A."/>
            <person name="Militscher J."/>
            <person name="Miranda M."/>
            <person name="Nguyen M."/>
            <person name="Nierman W.C."/>
            <person name="Osborne B.I."/>
            <person name="Pai G."/>
            <person name="Peterson J."/>
            <person name="Pham P.K."/>
            <person name="Rizzo M."/>
            <person name="Rooney T."/>
            <person name="Rowley D."/>
            <person name="Sakano H."/>
            <person name="Salzberg S.L."/>
            <person name="Schwartz J.R."/>
            <person name="Shinn P."/>
            <person name="Southwick A.M."/>
            <person name="Sun H."/>
            <person name="Tallon L.J."/>
            <person name="Tambunga G."/>
            <person name="Toriumi M.J."/>
            <person name="Town C.D."/>
            <person name="Utterback T."/>
            <person name="Van Aken S."/>
            <person name="Vaysberg M."/>
            <person name="Vysotskaia V.S."/>
            <person name="Walker M."/>
            <person name="Wu D."/>
            <person name="Yu G."/>
            <person name="Fraser C.M."/>
            <person name="Venter J.C."/>
            <person name="Davis R.W."/>
        </authorList>
    </citation>
    <scope>NUCLEOTIDE SEQUENCE [LARGE SCALE GENOMIC DNA]</scope>
    <source>
        <strain>cv. Columbia</strain>
    </source>
</reference>
<reference key="4">
    <citation type="journal article" date="2017" name="Plant J.">
        <title>Araport11: a complete reannotation of the Arabidopsis thaliana reference genome.</title>
        <authorList>
            <person name="Cheng C.Y."/>
            <person name="Krishnakumar V."/>
            <person name="Chan A.P."/>
            <person name="Thibaud-Nissen F."/>
            <person name="Schobel S."/>
            <person name="Town C.D."/>
        </authorList>
    </citation>
    <scope>GENOME REANNOTATION</scope>
    <source>
        <strain>cv. Columbia</strain>
    </source>
</reference>
<reference key="5">
    <citation type="journal article" date="2003" name="Science">
        <title>Empirical analysis of transcriptional activity in the Arabidopsis genome.</title>
        <authorList>
            <person name="Yamada K."/>
            <person name="Lim J."/>
            <person name="Dale J.M."/>
            <person name="Chen H."/>
            <person name="Shinn P."/>
            <person name="Palm C.J."/>
            <person name="Southwick A.M."/>
            <person name="Wu H.C."/>
            <person name="Kim C.J."/>
            <person name="Nguyen M."/>
            <person name="Pham P.K."/>
            <person name="Cheuk R.F."/>
            <person name="Karlin-Newmann G."/>
            <person name="Liu S.X."/>
            <person name="Lam B."/>
            <person name="Sakano H."/>
            <person name="Wu T."/>
            <person name="Yu G."/>
            <person name="Miranda M."/>
            <person name="Quach H.L."/>
            <person name="Tripp M."/>
            <person name="Chang C.H."/>
            <person name="Lee J.M."/>
            <person name="Toriumi M.J."/>
            <person name="Chan M.M."/>
            <person name="Tang C.C."/>
            <person name="Onodera C.S."/>
            <person name="Deng J.M."/>
            <person name="Akiyama K."/>
            <person name="Ansari Y."/>
            <person name="Arakawa T."/>
            <person name="Banh J."/>
            <person name="Banno F."/>
            <person name="Bowser L."/>
            <person name="Brooks S.Y."/>
            <person name="Carninci P."/>
            <person name="Chao Q."/>
            <person name="Choy N."/>
            <person name="Enju A."/>
            <person name="Goldsmith A.D."/>
            <person name="Gurjal M."/>
            <person name="Hansen N.F."/>
            <person name="Hayashizaki Y."/>
            <person name="Johnson-Hopson C."/>
            <person name="Hsuan V.W."/>
            <person name="Iida K."/>
            <person name="Karnes M."/>
            <person name="Khan S."/>
            <person name="Koesema E."/>
            <person name="Ishida J."/>
            <person name="Jiang P.X."/>
            <person name="Jones T."/>
            <person name="Kawai J."/>
            <person name="Kamiya A."/>
            <person name="Meyers C."/>
            <person name="Nakajima M."/>
            <person name="Narusaka M."/>
            <person name="Seki M."/>
            <person name="Sakurai T."/>
            <person name="Satou M."/>
            <person name="Tamse R."/>
            <person name="Vaysberg M."/>
            <person name="Wallender E.K."/>
            <person name="Wong C."/>
            <person name="Yamamura Y."/>
            <person name="Yuan S."/>
            <person name="Shinozaki K."/>
            <person name="Davis R.W."/>
            <person name="Theologis A."/>
            <person name="Ecker J.R."/>
        </authorList>
    </citation>
    <scope>NUCLEOTIDE SEQUENCE [LARGE SCALE MRNA] (ISOFORM 2)</scope>
    <source>
        <strain>cv. Columbia</strain>
    </source>
</reference>
<reference key="6">
    <citation type="submission" date="2002-03" db="EMBL/GenBank/DDBJ databases">
        <title>Full-length cDNA from Arabidopsis thaliana.</title>
        <authorList>
            <person name="Brover V.V."/>
            <person name="Troukhan M.E."/>
            <person name="Alexandrov N.A."/>
            <person name="Lu Y.-P."/>
            <person name="Flavell R.B."/>
            <person name="Feldmann K.A."/>
        </authorList>
    </citation>
    <scope>NUCLEOTIDE SEQUENCE [LARGE SCALE MRNA] (ISOFORM 1)</scope>
</reference>
<reference key="7">
    <citation type="journal article" date="1998" name="Mol. Gen. Genet.">
        <title>Male sterility associated with APRT deficiency in Arabidopsis thaliana results from a mutation in the gene APT1.</title>
        <authorList>
            <person name="Gaillard C."/>
            <person name="Moffatt B.A."/>
            <person name="Blacker M."/>
            <person name="Laloue M."/>
        </authorList>
    </citation>
    <scope>FUNCTION</scope>
    <scope>DISRUPTION PHENOTYPE</scope>
</reference>
<reference key="8">
    <citation type="journal article" date="2002" name="Physiol. Plantarum">
        <title>Adenine phosphoribosyltransferase isoforms of Arabidopsis and their potential contributions to adenine and cytokinin metabolism.</title>
        <authorList>
            <person name="Allen M."/>
            <person name="Qin W."/>
            <person name="Moreau F."/>
            <person name="Moffatt B."/>
        </authorList>
    </citation>
    <scope>FUNCTION</scope>
    <scope>CATALYTIC ACTIVITY</scope>
    <scope>BIOPHYSICOCHEMICAL PROPERTIES</scope>
    <scope>SUBCELLULAR LOCATION</scope>
</reference>
<reference key="9">
    <citation type="journal article" date="2008" name="PLoS ONE">
        <title>Sorting signals, N-terminal modifications and abundance of the chloroplast proteome.</title>
        <authorList>
            <person name="Zybailov B."/>
            <person name="Rutschow H."/>
            <person name="Friso G."/>
            <person name="Rudella A."/>
            <person name="Emanuelsson O."/>
            <person name="Sun Q."/>
            <person name="van Wijk K.J."/>
        </authorList>
    </citation>
    <scope>IDENTIFICATION BY MASS SPECTROMETRY</scope>
    <scope>SUBCELLULAR LOCATION [LARGE SCALE ANALYSIS]</scope>
</reference>
<reference key="10">
    <citation type="journal article" date="2012" name="Mol. Cell. Proteomics">
        <title>Comparative large-scale characterisation of plant vs. mammal proteins reveals similar and idiosyncratic N-alpha acetylation features.</title>
        <authorList>
            <person name="Bienvenut W.V."/>
            <person name="Sumpton D."/>
            <person name="Martinez A."/>
            <person name="Lilla S."/>
            <person name="Espagne C."/>
            <person name="Meinnel T."/>
            <person name="Giglione C."/>
        </authorList>
    </citation>
    <scope>ACETYLATION [LARGE SCALE ANALYSIS] AT ALA-2 (ISOFORM 2)</scope>
    <scope>CLEAVAGE OF INITIATOR METHIONINE [LARGE SCALE ANALYSIS] (ISOFORM 2)</scope>
    <scope>IDENTIFICATION BY MASS SPECTROMETRY [LARGE SCALE ANALYSIS]</scope>
</reference>
<reference key="11">
    <citation type="journal article" date="2012" name="Mol. Plant">
        <title>Improved growth and stress tolerance in the Arabidopsis oxt1 mutant triggered by altered adenine metabolism.</title>
        <authorList>
            <person name="Sukrong S."/>
            <person name="Yun K.Y."/>
            <person name="Stadler P."/>
            <person name="Kumar C."/>
            <person name="Facciuolo T."/>
            <person name="Moffatt B.A."/>
            <person name="Falcone D.L."/>
        </authorList>
    </citation>
    <scope>FUNCTION</scope>
</reference>
<reference key="12">
    <citation type="journal article" date="2013" name="Mol. Plant">
        <title>Adenine phosphoribosyl transferase 1 is a key enzyme catalyzing cytokinin conversion from nucleobases to nucleotides in Arabidopsis.</title>
        <authorList>
            <person name="Zhang X."/>
            <person name="Chen Y."/>
            <person name="Lin X."/>
            <person name="Hong X."/>
            <person name="Zhu Y."/>
            <person name="Li W."/>
            <person name="He W."/>
            <person name="An F."/>
            <person name="Guo H."/>
        </authorList>
    </citation>
    <scope>FUNCTION</scope>
    <scope>CATALYTIC ACTIVITY</scope>
    <scope>DISRUPTION PHENOTYPE</scope>
    <scope>MUTAGENESIS OF PRO-85; LEU-99; ARG-149; GLY-168; GLY-195 AND GLY-195</scope>
</reference>
<protein>
    <recommendedName>
        <fullName>Adenine phosphoribosyltransferase 1, chloroplastic</fullName>
        <shortName>APRT 1</shortName>
        <shortName>AtAPT1</shortName>
        <ecNumber>2.4.2.7</ecNumber>
    </recommendedName>
</protein>